<proteinExistence type="inferred from homology"/>
<organism>
    <name type="scientific">Agrobacterium fabrum (strain C58 / ATCC 33970)</name>
    <name type="common">Agrobacterium tumefaciens (strain C58)</name>
    <dbReference type="NCBI Taxonomy" id="176299"/>
    <lineage>
        <taxon>Bacteria</taxon>
        <taxon>Pseudomonadati</taxon>
        <taxon>Pseudomonadota</taxon>
        <taxon>Alphaproteobacteria</taxon>
        <taxon>Hyphomicrobiales</taxon>
        <taxon>Rhizobiaceae</taxon>
        <taxon>Rhizobium/Agrobacterium group</taxon>
        <taxon>Agrobacterium</taxon>
        <taxon>Agrobacterium tumefaciens complex</taxon>
    </lineage>
</organism>
<gene>
    <name evidence="1" type="primary">acpS</name>
    <name type="ordered locus">Atu1033</name>
    <name type="ORF">AGR_C_1902</name>
</gene>
<comment type="function">
    <text evidence="1">Transfers the 4'-phosphopantetheine moiety from coenzyme A to a Ser of acyl-carrier-protein.</text>
</comment>
<comment type="catalytic activity">
    <reaction evidence="1">
        <text>apo-[ACP] + CoA = holo-[ACP] + adenosine 3',5'-bisphosphate + H(+)</text>
        <dbReference type="Rhea" id="RHEA:12068"/>
        <dbReference type="Rhea" id="RHEA-COMP:9685"/>
        <dbReference type="Rhea" id="RHEA-COMP:9690"/>
        <dbReference type="ChEBI" id="CHEBI:15378"/>
        <dbReference type="ChEBI" id="CHEBI:29999"/>
        <dbReference type="ChEBI" id="CHEBI:57287"/>
        <dbReference type="ChEBI" id="CHEBI:58343"/>
        <dbReference type="ChEBI" id="CHEBI:64479"/>
        <dbReference type="EC" id="2.7.8.7"/>
    </reaction>
</comment>
<comment type="cofactor">
    <cofactor evidence="1">
        <name>Mg(2+)</name>
        <dbReference type="ChEBI" id="CHEBI:18420"/>
    </cofactor>
</comment>
<comment type="subcellular location">
    <subcellularLocation>
        <location evidence="1">Cytoplasm</location>
    </subcellularLocation>
</comment>
<comment type="similarity">
    <text evidence="1">Belongs to the P-Pant transferase superfamily. AcpS family.</text>
</comment>
<accession>Q8UGK4</accession>
<feature type="chain" id="PRO_0000175604" description="Holo-[acyl-carrier-protein] synthase">
    <location>
        <begin position="1"/>
        <end position="134"/>
    </location>
</feature>
<feature type="binding site" evidence="1">
    <location>
        <position position="8"/>
    </location>
    <ligand>
        <name>Mg(2+)</name>
        <dbReference type="ChEBI" id="CHEBI:18420"/>
    </ligand>
</feature>
<feature type="binding site" evidence="1">
    <location>
        <position position="57"/>
    </location>
    <ligand>
        <name>Mg(2+)</name>
        <dbReference type="ChEBI" id="CHEBI:18420"/>
    </ligand>
</feature>
<evidence type="ECO:0000255" key="1">
    <source>
        <dbReference type="HAMAP-Rule" id="MF_00101"/>
    </source>
</evidence>
<dbReference type="EC" id="2.7.8.7" evidence="1"/>
<dbReference type="EMBL" id="AE007869">
    <property type="protein sequence ID" value="AAK86841.1"/>
    <property type="molecule type" value="Genomic_DNA"/>
</dbReference>
<dbReference type="PIR" id="AH2703">
    <property type="entry name" value="AH2703"/>
</dbReference>
<dbReference type="PIR" id="H97485">
    <property type="entry name" value="H97485"/>
</dbReference>
<dbReference type="RefSeq" id="NP_354056.1">
    <property type="nucleotide sequence ID" value="NC_003062.2"/>
</dbReference>
<dbReference type="RefSeq" id="WP_010971345.1">
    <property type="nucleotide sequence ID" value="NC_003062.2"/>
</dbReference>
<dbReference type="SMR" id="Q8UGK4"/>
<dbReference type="STRING" id="176299.Atu1033"/>
<dbReference type="EnsemblBacteria" id="AAK86841">
    <property type="protein sequence ID" value="AAK86841"/>
    <property type="gene ID" value="Atu1033"/>
</dbReference>
<dbReference type="GeneID" id="1133071"/>
<dbReference type="KEGG" id="atu:Atu1033"/>
<dbReference type="PATRIC" id="fig|176299.10.peg.1045"/>
<dbReference type="eggNOG" id="COG0736">
    <property type="taxonomic scope" value="Bacteria"/>
</dbReference>
<dbReference type="HOGENOM" id="CLU_089696_0_2_5"/>
<dbReference type="OrthoDB" id="517356at2"/>
<dbReference type="PhylomeDB" id="Q8UGK4"/>
<dbReference type="BioCyc" id="AGRO:ATU1033-MONOMER"/>
<dbReference type="Proteomes" id="UP000000813">
    <property type="component" value="Chromosome circular"/>
</dbReference>
<dbReference type="GO" id="GO:0005737">
    <property type="term" value="C:cytoplasm"/>
    <property type="evidence" value="ECO:0007669"/>
    <property type="project" value="UniProtKB-SubCell"/>
</dbReference>
<dbReference type="GO" id="GO:0008897">
    <property type="term" value="F:holo-[acyl-carrier-protein] synthase activity"/>
    <property type="evidence" value="ECO:0007669"/>
    <property type="project" value="UniProtKB-UniRule"/>
</dbReference>
<dbReference type="GO" id="GO:0000287">
    <property type="term" value="F:magnesium ion binding"/>
    <property type="evidence" value="ECO:0007669"/>
    <property type="project" value="UniProtKB-UniRule"/>
</dbReference>
<dbReference type="GO" id="GO:0006633">
    <property type="term" value="P:fatty acid biosynthetic process"/>
    <property type="evidence" value="ECO:0007669"/>
    <property type="project" value="UniProtKB-UniRule"/>
</dbReference>
<dbReference type="Gene3D" id="3.90.470.20">
    <property type="entry name" value="4'-phosphopantetheinyl transferase domain"/>
    <property type="match status" value="1"/>
</dbReference>
<dbReference type="HAMAP" id="MF_00101">
    <property type="entry name" value="AcpS"/>
    <property type="match status" value="1"/>
</dbReference>
<dbReference type="InterPro" id="IPR008278">
    <property type="entry name" value="4-PPantetheinyl_Trfase_dom"/>
</dbReference>
<dbReference type="InterPro" id="IPR037143">
    <property type="entry name" value="4-PPantetheinyl_Trfase_dom_sf"/>
</dbReference>
<dbReference type="InterPro" id="IPR002582">
    <property type="entry name" value="ACPS"/>
</dbReference>
<dbReference type="InterPro" id="IPR004568">
    <property type="entry name" value="Ppantetheine-prot_Trfase_dom"/>
</dbReference>
<dbReference type="NCBIfam" id="TIGR00516">
    <property type="entry name" value="acpS"/>
    <property type="match status" value="1"/>
</dbReference>
<dbReference type="NCBIfam" id="TIGR00556">
    <property type="entry name" value="pantethn_trn"/>
    <property type="match status" value="1"/>
</dbReference>
<dbReference type="Pfam" id="PF01648">
    <property type="entry name" value="ACPS"/>
    <property type="match status" value="1"/>
</dbReference>
<dbReference type="SUPFAM" id="SSF56214">
    <property type="entry name" value="4'-phosphopantetheinyl transferase"/>
    <property type="match status" value="1"/>
</dbReference>
<reference key="1">
    <citation type="journal article" date="2001" name="Science">
        <title>The genome of the natural genetic engineer Agrobacterium tumefaciens C58.</title>
        <authorList>
            <person name="Wood D.W."/>
            <person name="Setubal J.C."/>
            <person name="Kaul R."/>
            <person name="Monks D.E."/>
            <person name="Kitajima J.P."/>
            <person name="Okura V.K."/>
            <person name="Zhou Y."/>
            <person name="Chen L."/>
            <person name="Wood G.E."/>
            <person name="Almeida N.F. Jr."/>
            <person name="Woo L."/>
            <person name="Chen Y."/>
            <person name="Paulsen I.T."/>
            <person name="Eisen J.A."/>
            <person name="Karp P.D."/>
            <person name="Bovee D. Sr."/>
            <person name="Chapman P."/>
            <person name="Clendenning J."/>
            <person name="Deatherage G."/>
            <person name="Gillet W."/>
            <person name="Grant C."/>
            <person name="Kutyavin T."/>
            <person name="Levy R."/>
            <person name="Li M.-J."/>
            <person name="McClelland E."/>
            <person name="Palmieri A."/>
            <person name="Raymond C."/>
            <person name="Rouse G."/>
            <person name="Saenphimmachak C."/>
            <person name="Wu Z."/>
            <person name="Romero P."/>
            <person name="Gordon D."/>
            <person name="Zhang S."/>
            <person name="Yoo H."/>
            <person name="Tao Y."/>
            <person name="Biddle P."/>
            <person name="Jung M."/>
            <person name="Krespan W."/>
            <person name="Perry M."/>
            <person name="Gordon-Kamm B."/>
            <person name="Liao L."/>
            <person name="Kim S."/>
            <person name="Hendrick C."/>
            <person name="Zhao Z.-Y."/>
            <person name="Dolan M."/>
            <person name="Chumley F."/>
            <person name="Tingey S.V."/>
            <person name="Tomb J.-F."/>
            <person name="Gordon M.P."/>
            <person name="Olson M.V."/>
            <person name="Nester E.W."/>
        </authorList>
    </citation>
    <scope>NUCLEOTIDE SEQUENCE [LARGE SCALE GENOMIC DNA]</scope>
    <source>
        <strain>C58 / ATCC 33970</strain>
    </source>
</reference>
<reference key="2">
    <citation type="journal article" date="2001" name="Science">
        <title>Genome sequence of the plant pathogen and biotechnology agent Agrobacterium tumefaciens C58.</title>
        <authorList>
            <person name="Goodner B."/>
            <person name="Hinkle G."/>
            <person name="Gattung S."/>
            <person name="Miller N."/>
            <person name="Blanchard M."/>
            <person name="Qurollo B."/>
            <person name="Goldman B.S."/>
            <person name="Cao Y."/>
            <person name="Askenazi M."/>
            <person name="Halling C."/>
            <person name="Mullin L."/>
            <person name="Houmiel K."/>
            <person name="Gordon J."/>
            <person name="Vaudin M."/>
            <person name="Iartchouk O."/>
            <person name="Epp A."/>
            <person name="Liu F."/>
            <person name="Wollam C."/>
            <person name="Allinger M."/>
            <person name="Doughty D."/>
            <person name="Scott C."/>
            <person name="Lappas C."/>
            <person name="Markelz B."/>
            <person name="Flanagan C."/>
            <person name="Crowell C."/>
            <person name="Gurson J."/>
            <person name="Lomo C."/>
            <person name="Sear C."/>
            <person name="Strub G."/>
            <person name="Cielo C."/>
            <person name="Slater S."/>
        </authorList>
    </citation>
    <scope>NUCLEOTIDE SEQUENCE [LARGE SCALE GENOMIC DNA]</scope>
    <source>
        <strain>C58 / ATCC 33970</strain>
    </source>
</reference>
<name>ACPS_AGRFC</name>
<sequence length="134" mass="14518">MIIGLGSDLIDIRRVEKSIERFGERFTHRCFTDIERAKSDGRKNRAASYAKRFAAKEACSKALGTGLANGVFWKDMGVVNLPGGKPTMILTNGAGARLAAMLPAGHRANIHLTITDDFPYAQAFVIIEALPVNG</sequence>
<protein>
    <recommendedName>
        <fullName evidence="1">Holo-[acyl-carrier-protein] synthase</fullName>
        <shortName evidence="1">Holo-ACP synthase</shortName>
        <ecNumber evidence="1">2.7.8.7</ecNumber>
    </recommendedName>
    <alternativeName>
        <fullName evidence="1">4'-phosphopantetheinyl transferase AcpS</fullName>
    </alternativeName>
</protein>
<keyword id="KW-0963">Cytoplasm</keyword>
<keyword id="KW-0275">Fatty acid biosynthesis</keyword>
<keyword id="KW-0276">Fatty acid metabolism</keyword>
<keyword id="KW-0444">Lipid biosynthesis</keyword>
<keyword id="KW-0443">Lipid metabolism</keyword>
<keyword id="KW-0460">Magnesium</keyword>
<keyword id="KW-0479">Metal-binding</keyword>
<keyword id="KW-1185">Reference proteome</keyword>
<keyword id="KW-0808">Transferase</keyword>